<gene>
    <name evidence="1" type="primary">plsX</name>
    <name type="ordered locus">LL0070</name>
    <name type="ORF">L71174</name>
</gene>
<evidence type="ECO:0000255" key="1">
    <source>
        <dbReference type="HAMAP-Rule" id="MF_00019"/>
    </source>
</evidence>
<reference key="1">
    <citation type="journal article" date="2001" name="Genome Res.">
        <title>The complete genome sequence of the lactic acid bacterium Lactococcus lactis ssp. lactis IL1403.</title>
        <authorList>
            <person name="Bolotin A."/>
            <person name="Wincker P."/>
            <person name="Mauger S."/>
            <person name="Jaillon O."/>
            <person name="Malarme K."/>
            <person name="Weissenbach J."/>
            <person name="Ehrlich S.D."/>
            <person name="Sorokin A."/>
        </authorList>
    </citation>
    <scope>NUCLEOTIDE SEQUENCE [LARGE SCALE GENOMIC DNA]</scope>
    <source>
        <strain>IL1403</strain>
    </source>
</reference>
<protein>
    <recommendedName>
        <fullName evidence="1">Phosphate acyltransferase</fullName>
        <ecNumber evidence="1">2.3.1.274</ecNumber>
    </recommendedName>
    <alternativeName>
        <fullName evidence="1">Acyl-ACP phosphotransacylase</fullName>
    </alternativeName>
    <alternativeName>
        <fullName evidence="1">Acyl-[acyl-carrier-protein]--phosphate acyltransferase</fullName>
    </alternativeName>
    <alternativeName>
        <fullName evidence="1">Phosphate-acyl-ACP acyltransferase</fullName>
    </alternativeName>
</protein>
<comment type="function">
    <text evidence="1">Catalyzes the reversible formation of acyl-phosphate (acyl-PO(4)) from acyl-[acyl-carrier-protein] (acyl-ACP). This enzyme utilizes acyl-ACP as fatty acyl donor, but not acyl-CoA.</text>
</comment>
<comment type="catalytic activity">
    <reaction evidence="1">
        <text>a fatty acyl-[ACP] + phosphate = an acyl phosphate + holo-[ACP]</text>
        <dbReference type="Rhea" id="RHEA:42292"/>
        <dbReference type="Rhea" id="RHEA-COMP:9685"/>
        <dbReference type="Rhea" id="RHEA-COMP:14125"/>
        <dbReference type="ChEBI" id="CHEBI:43474"/>
        <dbReference type="ChEBI" id="CHEBI:59918"/>
        <dbReference type="ChEBI" id="CHEBI:64479"/>
        <dbReference type="ChEBI" id="CHEBI:138651"/>
        <dbReference type="EC" id="2.3.1.274"/>
    </reaction>
</comment>
<comment type="pathway">
    <text evidence="1">Lipid metabolism; phospholipid metabolism.</text>
</comment>
<comment type="subunit">
    <text evidence="1">Homodimer. Probably interacts with PlsY.</text>
</comment>
<comment type="subcellular location">
    <subcellularLocation>
        <location evidence="1">Cytoplasm</location>
    </subcellularLocation>
    <text evidence="1">Associated with the membrane possibly through PlsY.</text>
</comment>
<comment type="similarity">
    <text evidence="1">Belongs to the PlsX family.</text>
</comment>
<dbReference type="EC" id="2.3.1.274" evidence="1"/>
<dbReference type="EMBL" id="AE005176">
    <property type="protein sequence ID" value="AAK04168.1"/>
    <property type="molecule type" value="Genomic_DNA"/>
</dbReference>
<dbReference type="PIR" id="F86633">
    <property type="entry name" value="F86633"/>
</dbReference>
<dbReference type="RefSeq" id="NP_266226.1">
    <property type="nucleotide sequence ID" value="NC_002662.1"/>
</dbReference>
<dbReference type="RefSeq" id="WP_010905085.1">
    <property type="nucleotide sequence ID" value="NC_002662.1"/>
</dbReference>
<dbReference type="SMR" id="Q9CJC7"/>
<dbReference type="PaxDb" id="272623-L71174"/>
<dbReference type="EnsemblBacteria" id="AAK04168">
    <property type="protein sequence ID" value="AAK04168"/>
    <property type="gene ID" value="L71174"/>
</dbReference>
<dbReference type="KEGG" id="lla:L71174"/>
<dbReference type="PATRIC" id="fig|272623.7.peg.76"/>
<dbReference type="eggNOG" id="COG0416">
    <property type="taxonomic scope" value="Bacteria"/>
</dbReference>
<dbReference type="HOGENOM" id="CLU_039379_1_1_9"/>
<dbReference type="OrthoDB" id="9806408at2"/>
<dbReference type="UniPathway" id="UPA00085"/>
<dbReference type="Proteomes" id="UP000002196">
    <property type="component" value="Chromosome"/>
</dbReference>
<dbReference type="GO" id="GO:0005737">
    <property type="term" value="C:cytoplasm"/>
    <property type="evidence" value="ECO:0007669"/>
    <property type="project" value="UniProtKB-SubCell"/>
</dbReference>
<dbReference type="GO" id="GO:0043811">
    <property type="term" value="F:phosphate:acyl-[acyl carrier protein] acyltransferase activity"/>
    <property type="evidence" value="ECO:0007669"/>
    <property type="project" value="UniProtKB-UniRule"/>
</dbReference>
<dbReference type="GO" id="GO:0006633">
    <property type="term" value="P:fatty acid biosynthetic process"/>
    <property type="evidence" value="ECO:0007669"/>
    <property type="project" value="UniProtKB-UniRule"/>
</dbReference>
<dbReference type="GO" id="GO:0008654">
    <property type="term" value="P:phospholipid biosynthetic process"/>
    <property type="evidence" value="ECO:0007669"/>
    <property type="project" value="UniProtKB-KW"/>
</dbReference>
<dbReference type="Gene3D" id="3.40.718.10">
    <property type="entry name" value="Isopropylmalate Dehydrogenase"/>
    <property type="match status" value="1"/>
</dbReference>
<dbReference type="HAMAP" id="MF_00019">
    <property type="entry name" value="PlsX"/>
    <property type="match status" value="1"/>
</dbReference>
<dbReference type="InterPro" id="IPR003664">
    <property type="entry name" value="FA_synthesis"/>
</dbReference>
<dbReference type="InterPro" id="IPR012281">
    <property type="entry name" value="Phospholipid_synth_PlsX-like"/>
</dbReference>
<dbReference type="NCBIfam" id="TIGR00182">
    <property type="entry name" value="plsX"/>
    <property type="match status" value="1"/>
</dbReference>
<dbReference type="PANTHER" id="PTHR30100">
    <property type="entry name" value="FATTY ACID/PHOSPHOLIPID SYNTHESIS PROTEIN PLSX"/>
    <property type="match status" value="1"/>
</dbReference>
<dbReference type="PANTHER" id="PTHR30100:SF1">
    <property type="entry name" value="PHOSPHATE ACYLTRANSFERASE"/>
    <property type="match status" value="1"/>
</dbReference>
<dbReference type="Pfam" id="PF02504">
    <property type="entry name" value="FA_synthesis"/>
    <property type="match status" value="1"/>
</dbReference>
<dbReference type="PIRSF" id="PIRSF002465">
    <property type="entry name" value="Phsphlp_syn_PlsX"/>
    <property type="match status" value="1"/>
</dbReference>
<dbReference type="SUPFAM" id="SSF53659">
    <property type="entry name" value="Isocitrate/Isopropylmalate dehydrogenase-like"/>
    <property type="match status" value="1"/>
</dbReference>
<name>PLSX_LACLA</name>
<feature type="chain" id="PRO_0000189891" description="Phosphate acyltransferase">
    <location>
        <begin position="1"/>
        <end position="331"/>
    </location>
</feature>
<accession>Q9CJC7</accession>
<organism>
    <name type="scientific">Lactococcus lactis subsp. lactis (strain IL1403)</name>
    <name type="common">Streptococcus lactis</name>
    <dbReference type="NCBI Taxonomy" id="272623"/>
    <lineage>
        <taxon>Bacteria</taxon>
        <taxon>Bacillati</taxon>
        <taxon>Bacillota</taxon>
        <taxon>Bacilli</taxon>
        <taxon>Lactobacillales</taxon>
        <taxon>Streptococcaceae</taxon>
        <taxon>Lactococcus</taxon>
    </lineage>
</organism>
<sequence>MKIAIDAMGGDFAPENIVKGVNLAKKELSDVTFQLYGDGAKIRQFLDDETNIEIVETTEIIDFHDDPVAAIKSKKDSSLVRAVTAVKKGEADAVLSAGSTGALLTAGLLLVKRIKQVSRPALMSTLPTADGRGFDMLDLGANTENTAHHLVDFAILGSYYAENVRGINKPRVALISNGAEESKGSPTVKEAHEILSAMSEINFIGNIESRDLLSGGADVVVTDGFTGNAILKAIEGTATVLMKEIKSAIMAGSVTTKIGGALIKKPLSVLKDLMSTDGAGGAAFVGLKAPVVKAHGNSSELAIASALKQIHKMLESDVSGKLVEHFEKMDK</sequence>
<keyword id="KW-0963">Cytoplasm</keyword>
<keyword id="KW-0444">Lipid biosynthesis</keyword>
<keyword id="KW-0443">Lipid metabolism</keyword>
<keyword id="KW-0594">Phospholipid biosynthesis</keyword>
<keyword id="KW-1208">Phospholipid metabolism</keyword>
<keyword id="KW-1185">Reference proteome</keyword>
<keyword id="KW-0808">Transferase</keyword>
<proteinExistence type="inferred from homology"/>